<reference key="1">
    <citation type="journal article" date="2004" name="Genome Res.">
        <title>The status, quality, and expansion of the NIH full-length cDNA project: the Mammalian Gene Collection (MGC).</title>
        <authorList>
            <consortium name="The MGC Project Team"/>
        </authorList>
    </citation>
    <scope>NUCLEOTIDE SEQUENCE [LARGE SCALE MRNA]</scope>
    <source>
        <tissue>Placenta</tissue>
    </source>
</reference>
<name>DHTK1_RAT</name>
<proteinExistence type="evidence at transcript level"/>
<feature type="transit peptide" description="Mitochondrion" evidence="3">
    <location>
        <begin position="1"/>
        <end status="unknown"/>
    </location>
</feature>
<feature type="chain" id="PRO_0000307939" description="2-oxoadipate dehydrogenase complex component E1">
    <location>
        <begin status="unknown"/>
        <end position="920"/>
    </location>
</feature>
<feature type="region of interest" description="Disordered" evidence="4">
    <location>
        <begin position="299"/>
        <end position="318"/>
    </location>
</feature>
<feature type="modified residue" description="N6-succinyllysine" evidence="1">
    <location>
        <position position="183"/>
    </location>
</feature>
<feature type="modified residue" description="N6-succinyllysine" evidence="1">
    <location>
        <position position="188"/>
    </location>
</feature>
<feature type="modified residue" description="N6-succinyllysine" evidence="1">
    <location>
        <position position="800"/>
    </location>
</feature>
<feature type="modified residue" description="N6-succinyllysine" evidence="1">
    <location>
        <position position="818"/>
    </location>
</feature>
<keyword id="KW-0324">Glycolysis</keyword>
<keyword id="KW-0496">Mitochondrion</keyword>
<keyword id="KW-0560">Oxidoreductase</keyword>
<keyword id="KW-1185">Reference proteome</keyword>
<keyword id="KW-0786">Thiamine pyrophosphate</keyword>
<keyword id="KW-0809">Transit peptide</keyword>
<evidence type="ECO:0000250" key="1">
    <source>
        <dbReference type="UniProtKB" id="A2ATU0"/>
    </source>
</evidence>
<evidence type="ECO:0000250" key="2">
    <source>
        <dbReference type="UniProtKB" id="Q96HY7"/>
    </source>
</evidence>
<evidence type="ECO:0000255" key="3"/>
<evidence type="ECO:0000256" key="4">
    <source>
        <dbReference type="SAM" id="MobiDB-lite"/>
    </source>
</evidence>
<sequence>MASATVAAAGRALRRAVPLLRRSYQTERGVYGYRPRKAGSGEPRGDRARPSVDHGLARLVTVYCEHGHKAAQINPLFPGQALLDTVPEIQALVQTLQGPFTTTGLLNMGKEEASLEEVLAYLNHIYCGPISIETAQLQSQEEKDWFARRFEELKKETFTTEERKHLSKLLLESQEFDHFLATKFATVKRYGGEGAESMMGFFHELLKLSAYGGITDIIIGMPHRGRLNLLTGLLQLPPELMFRKMRGLSEFPENVAAIGDVLSHLTSSVDLDFGAHRPLHVTMLPNPSHLEAINPVAVGKTRGRQQSQEDGDYSPNGSAQPGDKVICLQVHGDASFCGQGIVLETFTLSNLPHFRIGGSIHLIVNNQLGYTTPAERGRSSLYSSDIGKLVGCAIIHVNGDSPEEVVRATRLAFEYQRQFRKDVIIDLLCYRQWGHNELDEPFFTNPVMYKIIRARKSIPDTYAEHLIASGLMTQEEVSDIKASYYAKLNGHLANVAHYSPPAPHLQARWQGLVQPAACVTTWDTGVPLELLRFVGVKSVEVPEELQLHSHLLKMYVQSRMEKVKNGTNLDWATAETLALGSLLAQGFNVRLSGQDVGRGTFSQRHAMVVCQNTDDVYIPLNHMDPNQKGFLEVSNSPLSEEAVLGFEYGMSIESPKLLPLWEAQFGDFFNGAQIIFDTFISGGEAKWLLQSGLVILLPHGYDGAGPDHSSCRIERFLQMCDSAEEGVDSDTVNMFVVHPTTPAQYFHLLRRQMMRNFRKPLIVASPKMLLRYPVAVSTLEEMAPGTAFKPVIGDSSVDPKNVKTLIFCSGKHFYALLKQRESLGAKKRDFAIIRLEELCPFPLDSLQQEMGKYKHVQDIIWSQEEPQNMGPWSFVYPRFEKQLACKLRLVSRPPLPAPAVGIGTVHQQQHEAILFKTFTS</sequence>
<gene>
    <name type="primary">Dhtkd1</name>
</gene>
<protein>
    <recommendedName>
        <fullName>2-oxoadipate dehydrogenase complex component E1</fullName>
        <shortName evidence="2">E1a</shortName>
        <shortName>OADC-E1</shortName>
        <shortName>OADH-E1</shortName>
        <ecNumber evidence="2">1.2.4.-</ecNumber>
    </recommendedName>
    <alternativeName>
        <fullName>2-oxoadipate dehydrogenase, mitochondrial</fullName>
    </alternativeName>
    <alternativeName>
        <fullName>Alpha-ketoadipate dehydrogenase</fullName>
        <shortName>Alpha-KADH-E1</shortName>
    </alternativeName>
    <alternativeName>
        <fullName>Dehydrogenase E1 and transketolase domain-containing protein 1</fullName>
    </alternativeName>
    <alternativeName>
        <fullName>Probable 2-oxoglutarate dehydrogenase E1 component DHKTD1, mitochondrial</fullName>
    </alternativeName>
</protein>
<dbReference type="EC" id="1.2.4.-" evidence="2"/>
<dbReference type="EMBL" id="BC099075">
    <property type="protein sequence ID" value="AAH99075.1"/>
    <property type="molecule type" value="mRNA"/>
</dbReference>
<dbReference type="RefSeq" id="NP_001020891.1">
    <property type="nucleotide sequence ID" value="NM_001025720.1"/>
</dbReference>
<dbReference type="SMR" id="Q4KLP0"/>
<dbReference type="FunCoup" id="Q4KLP0">
    <property type="interactions" value="731"/>
</dbReference>
<dbReference type="STRING" id="10116.ENSRNOP00000059952"/>
<dbReference type="iPTMnet" id="Q4KLP0"/>
<dbReference type="PhosphoSitePlus" id="Q4KLP0"/>
<dbReference type="PaxDb" id="10116-ENSRNOP00000059952"/>
<dbReference type="GeneID" id="361272"/>
<dbReference type="KEGG" id="rno:361272"/>
<dbReference type="AGR" id="RGD:1308092"/>
<dbReference type="CTD" id="55526"/>
<dbReference type="RGD" id="1308092">
    <property type="gene designation" value="Dhtkd1"/>
</dbReference>
<dbReference type="VEuPathDB" id="HostDB:ENSRNOG00000023587"/>
<dbReference type="eggNOG" id="KOG0451">
    <property type="taxonomic scope" value="Eukaryota"/>
</dbReference>
<dbReference type="HOGENOM" id="CLU_004709_0_0_1"/>
<dbReference type="InParanoid" id="Q4KLP0"/>
<dbReference type="OrthoDB" id="30874at9989"/>
<dbReference type="PhylomeDB" id="Q4KLP0"/>
<dbReference type="Reactome" id="R-RNO-9858328">
    <property type="pathway name" value="OADH complex synthesizes glutaryl-CoA from 2-OA"/>
</dbReference>
<dbReference type="PRO" id="PR:Q4KLP0"/>
<dbReference type="Proteomes" id="UP000002494">
    <property type="component" value="Chromosome 17"/>
</dbReference>
<dbReference type="Bgee" id="ENSRNOG00000023587">
    <property type="expression patterns" value="Expressed in liver and 19 other cell types or tissues"/>
</dbReference>
<dbReference type="GO" id="GO:0005739">
    <property type="term" value="C:mitochondrion"/>
    <property type="evidence" value="ECO:0000250"/>
    <property type="project" value="UniProtKB"/>
</dbReference>
<dbReference type="GO" id="GO:0160167">
    <property type="term" value="C:oxoadipate dehydrogenase complex"/>
    <property type="evidence" value="ECO:0000266"/>
    <property type="project" value="RGD"/>
</dbReference>
<dbReference type="GO" id="GO:0160166">
    <property type="term" value="F:2-oxoadipate dehydrogenase activity"/>
    <property type="evidence" value="ECO:0000266"/>
    <property type="project" value="RGD"/>
</dbReference>
<dbReference type="GO" id="GO:0004591">
    <property type="term" value="F:oxoglutarate dehydrogenase (succinyl-transferring) activity"/>
    <property type="evidence" value="ECO:0007669"/>
    <property type="project" value="UniProtKB-EC"/>
</dbReference>
<dbReference type="GO" id="GO:0030976">
    <property type="term" value="F:thiamine pyrophosphate binding"/>
    <property type="evidence" value="ECO:0007669"/>
    <property type="project" value="InterPro"/>
</dbReference>
<dbReference type="GO" id="GO:0006091">
    <property type="term" value="P:generation of precursor metabolites and energy"/>
    <property type="evidence" value="ECO:0000250"/>
    <property type="project" value="UniProtKB"/>
</dbReference>
<dbReference type="GO" id="GO:0006096">
    <property type="term" value="P:glycolytic process"/>
    <property type="evidence" value="ECO:0007669"/>
    <property type="project" value="UniProtKB-KW"/>
</dbReference>
<dbReference type="GO" id="GO:0002244">
    <property type="term" value="P:hematopoietic progenitor cell differentiation"/>
    <property type="evidence" value="ECO:0000266"/>
    <property type="project" value="RGD"/>
</dbReference>
<dbReference type="CDD" id="cd02016">
    <property type="entry name" value="TPP_E1_OGDC_like"/>
    <property type="match status" value="1"/>
</dbReference>
<dbReference type="FunFam" id="3.40.50.11610:FF:000005">
    <property type="entry name" value="Probable 2-oxoglutarate dehydrogenase E1 component DHKTD1, mitochondrial"/>
    <property type="match status" value="1"/>
</dbReference>
<dbReference type="FunFam" id="3.40.50.970:FF:000034">
    <property type="entry name" value="Probable 2-oxoglutarate dehydrogenase E1 component DHKTD1, mitochondrial"/>
    <property type="match status" value="1"/>
</dbReference>
<dbReference type="FunFam" id="1.10.287.1150:FF:000005">
    <property type="entry name" value="probable 2-oxoglutarate dehydrogenase E1 component DHKTD1, mitochondrial"/>
    <property type="match status" value="1"/>
</dbReference>
<dbReference type="Gene3D" id="3.40.50.12470">
    <property type="match status" value="1"/>
</dbReference>
<dbReference type="Gene3D" id="3.40.50.970">
    <property type="match status" value="1"/>
</dbReference>
<dbReference type="Gene3D" id="3.40.50.11610">
    <property type="entry name" value="Multifunctional 2-oxoglutarate metabolism enzyme, C-terminal domain"/>
    <property type="match status" value="1"/>
</dbReference>
<dbReference type="Gene3D" id="1.10.287.1150">
    <property type="entry name" value="TPP helical domain"/>
    <property type="match status" value="1"/>
</dbReference>
<dbReference type="InterPro" id="IPR011603">
    <property type="entry name" value="2oxoglutarate_DH_E1"/>
</dbReference>
<dbReference type="InterPro" id="IPR001017">
    <property type="entry name" value="DH_E1"/>
</dbReference>
<dbReference type="InterPro" id="IPR042179">
    <property type="entry name" value="KGD_C_sf"/>
</dbReference>
<dbReference type="InterPro" id="IPR031717">
    <property type="entry name" value="ODO-1/KGD_C"/>
</dbReference>
<dbReference type="InterPro" id="IPR029061">
    <property type="entry name" value="THDP-binding"/>
</dbReference>
<dbReference type="InterPro" id="IPR005475">
    <property type="entry name" value="Transketolase-like_Pyr-bd"/>
</dbReference>
<dbReference type="NCBIfam" id="TIGR00239">
    <property type="entry name" value="2oxo_dh_E1"/>
    <property type="match status" value="1"/>
</dbReference>
<dbReference type="NCBIfam" id="NF006914">
    <property type="entry name" value="PRK09404.1"/>
    <property type="match status" value="1"/>
</dbReference>
<dbReference type="PANTHER" id="PTHR23152:SF4">
    <property type="entry name" value="2-OXOADIPATE DEHYDROGENASE COMPLEX COMPONENT E1"/>
    <property type="match status" value="1"/>
</dbReference>
<dbReference type="PANTHER" id="PTHR23152">
    <property type="entry name" value="2-OXOGLUTARATE DEHYDROGENASE"/>
    <property type="match status" value="1"/>
</dbReference>
<dbReference type="Pfam" id="PF00676">
    <property type="entry name" value="E1_dh"/>
    <property type="match status" value="1"/>
</dbReference>
<dbReference type="Pfam" id="PF16870">
    <property type="entry name" value="OxoGdeHyase_C"/>
    <property type="match status" value="1"/>
</dbReference>
<dbReference type="Pfam" id="PF02779">
    <property type="entry name" value="Transket_pyr"/>
    <property type="match status" value="1"/>
</dbReference>
<dbReference type="PIRSF" id="PIRSF000157">
    <property type="entry name" value="Oxoglu_dh_E1"/>
    <property type="match status" value="1"/>
</dbReference>
<dbReference type="SMART" id="SM00861">
    <property type="entry name" value="Transket_pyr"/>
    <property type="match status" value="1"/>
</dbReference>
<dbReference type="SUPFAM" id="SSF52518">
    <property type="entry name" value="Thiamin diphosphate-binding fold (THDP-binding)"/>
    <property type="match status" value="2"/>
</dbReference>
<comment type="function">
    <text evidence="2">2-oxoadipate dehydrogenase (E1a) component of the 2-oxoadipate dehydrogenase complex (OADHC). Participates in the first step, rate limiting for the overall conversion of 2-oxoadipate (alpha-ketoadipate) to glutaryl-CoA and CO(2) catalyzed by the whole OADHC. Catalyzes the irreversible decarboxylation of 2-oxoadipate via the thiamine diphosphate (ThDP) cofactor and subsequent transfer of the decarboxylated acyl intermediate on an oxidized dihydrolipoyl group that is covalently amidated to the E2 enzyme (dihydrolipoyllysine-residue succinyltransferase or DLST). Can catalyze the decarboxylation of 2-oxoglutarate in vitro, but at a much lower rate than 2-oxoadipate. Responsible for the last step of L-lysine, L-hydroxylysine and L-tryptophan catabolism with the common product being 2-oxoadipate.</text>
</comment>
<comment type="catalytic activity">
    <reaction evidence="2">
        <text>N(6)-[(R)-lipoyl]-L-lysyl-[protein] + 2-oxoadipate + H(+) = N(6)-[(R)-S(8)-glutaryldihydrolipoyl]-L-lysyl-[protein] + CO2</text>
        <dbReference type="Rhea" id="RHEA:69576"/>
        <dbReference type="Rhea" id="RHEA-COMP:10474"/>
        <dbReference type="Rhea" id="RHEA-COMP:20093"/>
        <dbReference type="ChEBI" id="CHEBI:15378"/>
        <dbReference type="ChEBI" id="CHEBI:16526"/>
        <dbReference type="ChEBI" id="CHEBI:57499"/>
        <dbReference type="ChEBI" id="CHEBI:83099"/>
        <dbReference type="ChEBI" id="CHEBI:184385"/>
    </reaction>
    <physiologicalReaction direction="left-to-right" evidence="2">
        <dbReference type="Rhea" id="RHEA:69577"/>
    </physiologicalReaction>
</comment>
<comment type="cofactor">
    <cofactor evidence="2">
        <name>thiamine diphosphate</name>
        <dbReference type="ChEBI" id="CHEBI:58937"/>
    </cofactor>
</comment>
<comment type="pathway">
    <text evidence="2">Amino-acid degradation.</text>
</comment>
<comment type="subunit">
    <text evidence="2">The 2-oxoadipate dehydrogenase complex is composed of OADH (2-oxoadipate dehydrogenase; E1a), DLST (dihydrolipoamide succinyltransferase; E2) and DLD (dihydrolipoamide dehydrogenase; E3). E1a functional unit is a dimer.</text>
</comment>
<comment type="subcellular location">
    <subcellularLocation>
        <location evidence="2">Mitochondrion</location>
    </subcellularLocation>
</comment>
<comment type="miscellaneous">
    <text evidence="2">The mitochondrial 2-oxoglutarate and 2-oxoadipate dehydrogenase complexes (OGDHC and OADHC, respectively) share their E2 (DLST) and E3 (dihydrolipoyl dehydrogenase or DLD) components, but the E1 component is specific to each complex (E1o and E1a, respectively).</text>
</comment>
<comment type="similarity">
    <text evidence="2">Belongs to the alpha-ketoglutarate dehydrogenase family.</text>
</comment>
<accession>Q4KLP0</accession>
<organism>
    <name type="scientific">Rattus norvegicus</name>
    <name type="common">Rat</name>
    <dbReference type="NCBI Taxonomy" id="10116"/>
    <lineage>
        <taxon>Eukaryota</taxon>
        <taxon>Metazoa</taxon>
        <taxon>Chordata</taxon>
        <taxon>Craniata</taxon>
        <taxon>Vertebrata</taxon>
        <taxon>Euteleostomi</taxon>
        <taxon>Mammalia</taxon>
        <taxon>Eutheria</taxon>
        <taxon>Euarchontoglires</taxon>
        <taxon>Glires</taxon>
        <taxon>Rodentia</taxon>
        <taxon>Myomorpha</taxon>
        <taxon>Muroidea</taxon>
        <taxon>Muridae</taxon>
        <taxon>Murinae</taxon>
        <taxon>Rattus</taxon>
    </lineage>
</organism>